<proteinExistence type="inferred from homology"/>
<accession>B3QIX7</accession>
<gene>
    <name evidence="1" type="primary">flbT</name>
    <name type="ordered locus">Rpal_4437</name>
</gene>
<protein>
    <recommendedName>
        <fullName evidence="1">Probable flagellum biosynthesis repressor protein FlbT</fullName>
    </recommendedName>
</protein>
<dbReference type="EMBL" id="CP001096">
    <property type="protein sequence ID" value="ACF02933.1"/>
    <property type="molecule type" value="Genomic_DNA"/>
</dbReference>
<dbReference type="RefSeq" id="WP_011159450.1">
    <property type="nucleotide sequence ID" value="NC_011004.1"/>
</dbReference>
<dbReference type="GeneID" id="66895030"/>
<dbReference type="KEGG" id="rpt:Rpal_4437"/>
<dbReference type="HOGENOM" id="CLU_130913_0_0_5"/>
<dbReference type="OrthoDB" id="8561314at2"/>
<dbReference type="Proteomes" id="UP000001725">
    <property type="component" value="Chromosome"/>
</dbReference>
<dbReference type="GO" id="GO:0048027">
    <property type="term" value="F:mRNA 5'-UTR binding"/>
    <property type="evidence" value="ECO:0007669"/>
    <property type="project" value="UniProtKB-UniRule"/>
</dbReference>
<dbReference type="GO" id="GO:0044781">
    <property type="term" value="P:bacterial-type flagellum organization"/>
    <property type="evidence" value="ECO:0007669"/>
    <property type="project" value="UniProtKB-KW"/>
</dbReference>
<dbReference type="GO" id="GO:0006402">
    <property type="term" value="P:mRNA catabolic process"/>
    <property type="evidence" value="ECO:0007669"/>
    <property type="project" value="InterPro"/>
</dbReference>
<dbReference type="GO" id="GO:1902209">
    <property type="term" value="P:negative regulation of bacterial-type flagellum assembly"/>
    <property type="evidence" value="ECO:0007669"/>
    <property type="project" value="UniProtKB-UniRule"/>
</dbReference>
<dbReference type="HAMAP" id="MF_00783">
    <property type="entry name" value="FlbT"/>
    <property type="match status" value="1"/>
</dbReference>
<dbReference type="InterPro" id="IPR009967">
    <property type="entry name" value="Flagellum_FlbT"/>
</dbReference>
<dbReference type="NCBIfam" id="NF009432">
    <property type="entry name" value="PRK12791.1"/>
    <property type="match status" value="1"/>
</dbReference>
<dbReference type="Pfam" id="PF07378">
    <property type="entry name" value="FlbT"/>
    <property type="match status" value="1"/>
</dbReference>
<sequence length="126" mass="14538">MPLRVELKPFERIVIGQSVITNSDTRTTFLIDGDAPILREKDILTAETANTPVKRIYLCVQMMYLQNDIPAYQDLYLGFIKELIEAVPSFRETIEATSNHILSGNLYKALRELRPLIKREEELLSR</sequence>
<evidence type="ECO:0000255" key="1">
    <source>
        <dbReference type="HAMAP-Rule" id="MF_00783"/>
    </source>
</evidence>
<reference key="1">
    <citation type="submission" date="2008-05" db="EMBL/GenBank/DDBJ databases">
        <title>Complete sequence of Rhodopseudomonas palustris TIE-1.</title>
        <authorList>
            <consortium name="US DOE Joint Genome Institute"/>
            <person name="Lucas S."/>
            <person name="Copeland A."/>
            <person name="Lapidus A."/>
            <person name="Glavina del Rio T."/>
            <person name="Dalin E."/>
            <person name="Tice H."/>
            <person name="Pitluck S."/>
            <person name="Chain P."/>
            <person name="Malfatti S."/>
            <person name="Shin M."/>
            <person name="Vergez L."/>
            <person name="Lang D."/>
            <person name="Schmutz J."/>
            <person name="Larimer F."/>
            <person name="Land M."/>
            <person name="Hauser L."/>
            <person name="Kyrpides N."/>
            <person name="Mikhailova N."/>
            <person name="Emerson D."/>
            <person name="Newman D.K."/>
            <person name="Roden E."/>
            <person name="Richardson P."/>
        </authorList>
    </citation>
    <scope>NUCLEOTIDE SEQUENCE [LARGE SCALE GENOMIC DNA]</scope>
    <source>
        <strain>TIE-1</strain>
    </source>
</reference>
<comment type="function">
    <text evidence="1">Has a post-transcriptional repressor function in flagellum biogenesis. Associates with the 5'-UTR of fljK mRNA and promotes its degradation.</text>
</comment>
<comment type="similarity">
    <text evidence="1">Belongs to the FlbT family.</text>
</comment>
<feature type="chain" id="PRO_1000133724" description="Probable flagellum biosynthesis repressor protein FlbT">
    <location>
        <begin position="1"/>
        <end position="126"/>
    </location>
</feature>
<name>FLBT_RHOPT</name>
<organism>
    <name type="scientific">Rhodopseudomonas palustris (strain TIE-1)</name>
    <dbReference type="NCBI Taxonomy" id="395960"/>
    <lineage>
        <taxon>Bacteria</taxon>
        <taxon>Pseudomonadati</taxon>
        <taxon>Pseudomonadota</taxon>
        <taxon>Alphaproteobacteria</taxon>
        <taxon>Hyphomicrobiales</taxon>
        <taxon>Nitrobacteraceae</taxon>
        <taxon>Rhodopseudomonas</taxon>
    </lineage>
</organism>
<keyword id="KW-1005">Bacterial flagellum biogenesis</keyword>
<keyword id="KW-0678">Repressor</keyword>
<keyword id="KW-0694">RNA-binding</keyword>